<organismHost>
    <name type="scientific">Oryctolagus cuniculus</name>
    <name type="common">Rabbit</name>
    <dbReference type="NCBI Taxonomy" id="9986"/>
</organismHost>
<gene>
    <name type="ordered locus">m002L</name>
    <name type="ORF">T2</name>
</gene>
<dbReference type="EMBL" id="M95181">
    <property type="protein sequence ID" value="AAA46632.1"/>
    <property type="molecule type" value="Genomic_DNA"/>
</dbReference>
<dbReference type="EMBL" id="AF170726">
    <property type="protein sequence ID" value="AAF15046.1"/>
    <property type="molecule type" value="Genomic_DNA"/>
</dbReference>
<dbReference type="EMBL" id="AF170726">
    <property type="protein sequence ID" value="AAF14887.1"/>
    <property type="molecule type" value="Genomic_DNA"/>
</dbReference>
<dbReference type="PIR" id="A40566">
    <property type="entry name" value="GQVZML"/>
</dbReference>
<dbReference type="RefSeq" id="NP_051713.1">
    <property type="nucleotide sequence ID" value="NC_001132.2"/>
</dbReference>
<dbReference type="RefSeq" id="NP_051879.1">
    <property type="nucleotide sequence ID" value="NC_001132.2"/>
</dbReference>
<dbReference type="SMR" id="P29825"/>
<dbReference type="GeneID" id="932138"/>
<dbReference type="KEGG" id="vg:1670230"/>
<dbReference type="KEGG" id="vg:932138"/>
<dbReference type="Proteomes" id="UP000000867">
    <property type="component" value="Segment"/>
</dbReference>
<dbReference type="GO" id="GO:0043120">
    <property type="term" value="F:tumor necrosis factor binding"/>
    <property type="evidence" value="ECO:0007669"/>
    <property type="project" value="TreeGrafter"/>
</dbReference>
<dbReference type="GO" id="GO:0005031">
    <property type="term" value="F:tumor necrosis factor receptor activity"/>
    <property type="evidence" value="ECO:0007669"/>
    <property type="project" value="InterPro"/>
</dbReference>
<dbReference type="GO" id="GO:0051044">
    <property type="term" value="P:positive regulation of membrane protein ectodomain proteolysis"/>
    <property type="evidence" value="ECO:0007669"/>
    <property type="project" value="TreeGrafter"/>
</dbReference>
<dbReference type="GO" id="GO:0042129">
    <property type="term" value="P:regulation of T cell proliferation"/>
    <property type="evidence" value="ECO:0007669"/>
    <property type="project" value="TreeGrafter"/>
</dbReference>
<dbReference type="GO" id="GO:0052031">
    <property type="term" value="P:symbiont-mediated perturbation of host defense response"/>
    <property type="evidence" value="ECO:0007669"/>
    <property type="project" value="InterPro"/>
</dbReference>
<dbReference type="CDD" id="cd15839">
    <property type="entry name" value="TNFRSF_viral"/>
    <property type="match status" value="1"/>
</dbReference>
<dbReference type="Gene3D" id="2.60.240.20">
    <property type="match status" value="1"/>
</dbReference>
<dbReference type="Gene3D" id="2.10.50.10">
    <property type="entry name" value="Tumor Necrosis Factor Receptor, subunit A, domain 2"/>
    <property type="match status" value="2"/>
</dbReference>
<dbReference type="InterPro" id="IPR010806">
    <property type="entry name" value="Poxvirus_TNF-rcpt-II_C"/>
</dbReference>
<dbReference type="InterPro" id="IPR011172">
    <property type="entry name" value="Poxvirus_TNF_rcpt-II"/>
</dbReference>
<dbReference type="InterPro" id="IPR051670">
    <property type="entry name" value="TNF_chemokine_rcpt-like"/>
</dbReference>
<dbReference type="InterPro" id="IPR001368">
    <property type="entry name" value="TNFR/NGFR_Cys_rich_reg"/>
</dbReference>
<dbReference type="InterPro" id="IPR034059">
    <property type="entry name" value="TNFRSF_N_viral"/>
</dbReference>
<dbReference type="PANTHER" id="PTHR47386">
    <property type="entry name" value="TUMOR NECROSIS FACTOR RECEPTOR SUPERFAMILY MEMBER 1B"/>
    <property type="match status" value="1"/>
</dbReference>
<dbReference type="PANTHER" id="PTHR47386:SF1">
    <property type="entry name" value="TUMOR NECROSIS FACTOR RECEPTOR SUPERFAMILY MEMBER 1B"/>
    <property type="match status" value="1"/>
</dbReference>
<dbReference type="Pfam" id="PF07190">
    <property type="entry name" value="CrmD_SECRET"/>
    <property type="match status" value="1"/>
</dbReference>
<dbReference type="Pfam" id="PF00020">
    <property type="entry name" value="TNFR_c6"/>
    <property type="match status" value="2"/>
</dbReference>
<dbReference type="PIRSF" id="PIRSF001790">
    <property type="entry name" value="TNF_C22L"/>
    <property type="match status" value="1"/>
</dbReference>
<dbReference type="SMART" id="SM00208">
    <property type="entry name" value="TNFR"/>
    <property type="match status" value="3"/>
</dbReference>
<dbReference type="SUPFAM" id="SSF57586">
    <property type="entry name" value="TNF receptor-like"/>
    <property type="match status" value="2"/>
</dbReference>
<dbReference type="PROSITE" id="PS00652">
    <property type="entry name" value="TNFR_NGFR_1"/>
    <property type="match status" value="2"/>
</dbReference>
<dbReference type="PROSITE" id="PS50050">
    <property type="entry name" value="TNFR_NGFR_2"/>
    <property type="match status" value="2"/>
</dbReference>
<comment type="function">
    <text>Binds to TNF-alpha and beta. Probably prevents TNF to reach cellular target and thereby deampening the potential antiviral effects of the cytokine.</text>
</comment>
<reference key="1">
    <citation type="journal article" date="1991" name="Virology">
        <title>Myxoma virus expresses a secreted protein with homology to the tumor necrosis factor receptor gene family that contributes to viral virulence.</title>
        <authorList>
            <person name="Upton C."/>
            <person name="Macen J.L."/>
            <person name="Schreiber M."/>
            <person name="McFadden G."/>
        </authorList>
    </citation>
    <scope>NUCLEOTIDE SEQUENCE [GENOMIC DNA]</scope>
</reference>
<reference key="2">
    <citation type="journal article" date="1999" name="Virology">
        <title>The complete DNA sequence of myxoma virus.</title>
        <authorList>
            <person name="Cameron C."/>
            <person name="Hota-Mitchell S."/>
            <person name="Chen L."/>
            <person name="Barrett J.W."/>
            <person name="Cao J.-X."/>
            <person name="Macaulay C."/>
            <person name="Willer D.O."/>
            <person name="Evans D.H."/>
            <person name="McFadden G."/>
        </authorList>
    </citation>
    <scope>NUCLEOTIDE SEQUENCE [LARGE SCALE GENOMIC DNA]</scope>
</reference>
<feature type="signal peptide" evidence="1">
    <location>
        <begin position="1"/>
        <end position="16"/>
    </location>
</feature>
<feature type="chain" id="PRO_0000034613" description="Tumor necrosis factor soluble receptor">
    <location>
        <begin position="17"/>
        <end position="326"/>
    </location>
</feature>
<feature type="repeat" description="TNFR-Cys 1">
    <location>
        <begin position="27"/>
        <end position="62"/>
    </location>
</feature>
<feature type="repeat" description="TNFR-Cys 2">
    <location>
        <begin position="63"/>
        <end position="104"/>
    </location>
</feature>
<feature type="repeat" description="TNFR-Cys 3">
    <location>
        <begin position="105"/>
        <end position="147"/>
    </location>
</feature>
<feature type="repeat" description="TNFR-Cys 4">
    <location>
        <begin position="148"/>
        <end position="186"/>
    </location>
</feature>
<feature type="glycosylation site" description="N-linked (GlcNAc...) asparagine; by host" evidence="1">
    <location>
        <position position="66"/>
    </location>
</feature>
<feature type="glycosylation site" description="N-linked (GlcNAc...) asparagine; by host" evidence="1">
    <location>
        <position position="181"/>
    </location>
</feature>
<feature type="glycosylation site" description="N-linked (GlcNAc...) asparagine; by host" evidence="1">
    <location>
        <position position="205"/>
    </location>
</feature>
<feature type="glycosylation site" description="N-linked (GlcNAc...) asparagine; by host" evidence="1">
    <location>
        <position position="238"/>
    </location>
</feature>
<feature type="disulfide bond" evidence="2">
    <location>
        <begin position="28"/>
        <end position="39"/>
    </location>
</feature>
<feature type="disulfide bond" evidence="2">
    <location>
        <begin position="40"/>
        <end position="53"/>
    </location>
</feature>
<feature type="disulfide bond" evidence="2">
    <location>
        <begin position="43"/>
        <end position="61"/>
    </location>
</feature>
<feature type="disulfide bond" evidence="2">
    <location>
        <begin position="64"/>
        <end position="79"/>
    </location>
</feature>
<feature type="disulfide bond" evidence="2">
    <location>
        <begin position="82"/>
        <end position="96"/>
    </location>
</feature>
<feature type="disulfide bond" evidence="2">
    <location>
        <begin position="86"/>
        <end position="104"/>
    </location>
</feature>
<feature type="disulfide bond" evidence="2">
    <location>
        <begin position="106"/>
        <end position="120"/>
    </location>
</feature>
<feature type="disulfide bond" evidence="2">
    <location>
        <begin position="123"/>
        <end position="146"/>
    </location>
</feature>
<feature type="disulfide bond" evidence="2">
    <location>
        <begin position="129"/>
        <end position="149"/>
    </location>
</feature>
<feature type="disulfide bond" evidence="2">
    <location>
        <begin position="164"/>
        <end position="185"/>
    </location>
</feature>
<organism>
    <name type="scientific">Myxoma virus (strain Lausanne)</name>
    <name type="common">MYXV</name>
    <dbReference type="NCBI Taxonomy" id="31530"/>
    <lineage>
        <taxon>Viruses</taxon>
        <taxon>Varidnaviria</taxon>
        <taxon>Bamfordvirae</taxon>
        <taxon>Nucleocytoviricota</taxon>
        <taxon>Pokkesviricetes</taxon>
        <taxon>Chitovirales</taxon>
        <taxon>Poxviridae</taxon>
        <taxon>Chordopoxvirinae</taxon>
        <taxon>Leporipoxvirus</taxon>
        <taxon>Myxoma virus</taxon>
    </lineage>
</organism>
<name>VT2_MYXVL</name>
<evidence type="ECO:0000255" key="1"/>
<evidence type="ECO:0000255" key="2">
    <source>
        <dbReference type="PROSITE-ProRule" id="PRU00206"/>
    </source>
</evidence>
<sequence>MFRLTLLLAYVACVYGGGAPYGADRGKCRGNDYEKDGLCCTSCPPGSYASRLCGPGSDTVCSPCKNETFTASTNHAPACVSCRGRCTGHLSESQSCDKTRDRVCDCSAGNYCLLKGQEGCRICAPKTKCPAGYGVSGHTRTGDVLCTKCPRYTYSDAVSSTETCTSSFNYISVEFNLYPVNDTSCTTTAGPNEVVKTSEFSVTLNHTDCDPVFHTEYYGTSGSEGAGGFFTGMDRYQNTTKMCTLNIEIRCVEGDAVRTIPRTSDGVGVLSHSETITVIGGCLSDVNVDIEYSDSNHPEEVDDFVEYHWGTRLRLFPSPKRCRLVS</sequence>
<accession>P29825</accession>
<proteinExistence type="inferred from homology"/>
<keyword id="KW-1015">Disulfide bond</keyword>
<keyword id="KW-0325">Glycoprotein</keyword>
<keyword id="KW-0675">Receptor</keyword>
<keyword id="KW-1185">Reference proteome</keyword>
<keyword id="KW-0677">Repeat</keyword>
<keyword id="KW-0732">Signal</keyword>
<keyword id="KW-0843">Virulence</keyword>
<protein>
    <recommendedName>
        <fullName>Tumor necrosis factor soluble receptor</fullName>
    </recommendedName>
    <alternativeName>
        <fullName>Protein T2</fullName>
    </alternativeName>
</protein>